<proteinExistence type="evidence at protein level"/>
<organism>
    <name type="scientific">Escherichia coli (strain K12)</name>
    <dbReference type="NCBI Taxonomy" id="83333"/>
    <lineage>
        <taxon>Bacteria</taxon>
        <taxon>Pseudomonadati</taxon>
        <taxon>Pseudomonadota</taxon>
        <taxon>Gammaproteobacteria</taxon>
        <taxon>Enterobacterales</taxon>
        <taxon>Enterobacteriaceae</taxon>
        <taxon>Escherichia</taxon>
    </lineage>
</organism>
<protein>
    <recommendedName>
        <fullName>Inner membrane protein YnjI</fullName>
    </recommendedName>
</protein>
<evidence type="ECO:0000255" key="1"/>
<evidence type="ECO:0000305" key="2"/>
<sequence length="346" mass="40346">MKKVLLQNHPGSEKYSFNGWEIFNSNFERMIKENKAMLLCKWGFYLTCVVAVMFVFAAITSNGLNERGLITAGCSFLYLLIMMGLIVRAGFKAKKEQLHYYQAKGIEPLSIEKLQALQLIAPYRFYHKQWSETLEFWPRKPEPGKDTFQYHVLPFDSIDIISKRRESLEDQWGIEDSESYCALMEHFLSGDHGANTFKANMEEAPEQVIALLNKFAVFPSDYISDCANHSSGKSSAKLIWAAELSWMISISSTAFQNGTIEEELAWHYIMLASRKAHELFESEEDYQKNSQMGFLYWHICCYRRKLTDAELEACYRYDKQFWEHYSKKCRWPIRNVPWGASSVKYS</sequence>
<reference key="1">
    <citation type="journal article" date="1997" name="Science">
        <title>The complete genome sequence of Escherichia coli K-12.</title>
        <authorList>
            <person name="Blattner F.R."/>
            <person name="Plunkett G. III"/>
            <person name="Bloch C.A."/>
            <person name="Perna N.T."/>
            <person name="Burland V."/>
            <person name="Riley M."/>
            <person name="Collado-Vides J."/>
            <person name="Glasner J.D."/>
            <person name="Rode C.K."/>
            <person name="Mayhew G.F."/>
            <person name="Gregor J."/>
            <person name="Davis N.W."/>
            <person name="Kirkpatrick H.A."/>
            <person name="Goeden M.A."/>
            <person name="Rose D.J."/>
            <person name="Mau B."/>
            <person name="Shao Y."/>
        </authorList>
    </citation>
    <scope>NUCLEOTIDE SEQUENCE [LARGE SCALE GENOMIC DNA]</scope>
    <source>
        <strain>K12 / MG1655 / ATCC 47076</strain>
    </source>
</reference>
<reference key="2">
    <citation type="journal article" date="2006" name="Mol. Syst. Biol.">
        <title>Highly accurate genome sequences of Escherichia coli K-12 strains MG1655 and W3110.</title>
        <authorList>
            <person name="Hayashi K."/>
            <person name="Morooka N."/>
            <person name="Yamamoto Y."/>
            <person name="Fujita K."/>
            <person name="Isono K."/>
            <person name="Choi S."/>
            <person name="Ohtsubo E."/>
            <person name="Baba T."/>
            <person name="Wanner B.L."/>
            <person name="Mori H."/>
            <person name="Horiuchi T."/>
        </authorList>
    </citation>
    <scope>NUCLEOTIDE SEQUENCE [LARGE SCALE GENOMIC DNA]</scope>
    <source>
        <strain>K12 / W3110 / ATCC 27325 / DSM 5911</strain>
    </source>
</reference>
<reference key="3">
    <citation type="journal article" date="1989" name="J. Biol. Chem.">
        <title>Molecular cloning and DNA sequence analysis of Escherichia coli topB, the gene encoding topoisomerase III.</title>
        <authorList>
            <person name="Digate R.J."/>
            <person name="Marians K.J."/>
        </authorList>
    </citation>
    <scope>NUCLEOTIDE SEQUENCE [GENOMIC DNA] OF 1-36</scope>
    <source>
        <strain>HMS-83</strain>
    </source>
</reference>
<reference key="4">
    <citation type="journal article" date="2005" name="Science">
        <title>Global topology analysis of the Escherichia coli inner membrane proteome.</title>
        <authorList>
            <person name="Daley D.O."/>
            <person name="Rapp M."/>
            <person name="Granseth E."/>
            <person name="Melen K."/>
            <person name="Drew D."/>
            <person name="von Heijne G."/>
        </authorList>
    </citation>
    <scope>TOPOLOGY [LARGE SCALE ANALYSIS]</scope>
    <source>
        <strain>K12 / MG1655 / ATCC 47076</strain>
    </source>
</reference>
<keyword id="KW-0997">Cell inner membrane</keyword>
<keyword id="KW-1003">Cell membrane</keyword>
<keyword id="KW-0472">Membrane</keyword>
<keyword id="KW-1185">Reference proteome</keyword>
<keyword id="KW-0812">Transmembrane</keyword>
<keyword id="KW-1133">Transmembrane helix</keyword>
<feature type="chain" id="PRO_0000169009" description="Inner membrane protein YnjI">
    <location>
        <begin position="1"/>
        <end position="346"/>
    </location>
</feature>
<feature type="topological domain" description="Periplasmic" evidence="1">
    <location>
        <begin position="1"/>
        <end position="38"/>
    </location>
</feature>
<feature type="transmembrane region" description="Helical" evidence="1">
    <location>
        <begin position="39"/>
        <end position="59"/>
    </location>
</feature>
<feature type="topological domain" description="Cytoplasmic" evidence="1">
    <location>
        <begin position="60"/>
        <end position="68"/>
    </location>
</feature>
<feature type="transmembrane region" description="Helical" evidence="1">
    <location>
        <begin position="69"/>
        <end position="89"/>
    </location>
</feature>
<feature type="topological domain" description="Periplasmic" evidence="1">
    <location>
        <begin position="90"/>
        <end position="234"/>
    </location>
</feature>
<feature type="transmembrane region" description="Helical" evidence="1">
    <location>
        <begin position="235"/>
        <end position="255"/>
    </location>
</feature>
<feature type="topological domain" description="Cytoplasmic" evidence="1">
    <location>
        <begin position="256"/>
        <end position="346"/>
    </location>
</feature>
<feature type="sequence conflict" description="In Ref. 3; AAA83924." evidence="2" ref="3">
    <original>A</original>
    <variation>G</variation>
    <location>
        <position position="36"/>
    </location>
</feature>
<dbReference type="EMBL" id="U00096">
    <property type="protein sequence ID" value="AAC74832.2"/>
    <property type="molecule type" value="Genomic_DNA"/>
</dbReference>
<dbReference type="EMBL" id="AP009048">
    <property type="protein sequence ID" value="BAE76524.1"/>
    <property type="molecule type" value="Genomic_DNA"/>
</dbReference>
<dbReference type="EMBL" id="J05076">
    <property type="protein sequence ID" value="AAA83924.1"/>
    <property type="molecule type" value="Genomic_DNA"/>
</dbReference>
<dbReference type="PIR" id="B64936">
    <property type="entry name" value="B64936"/>
</dbReference>
<dbReference type="RefSeq" id="NP_416276.4">
    <property type="nucleotide sequence ID" value="NC_000913.3"/>
</dbReference>
<dbReference type="RefSeq" id="WP_000756910.1">
    <property type="nucleotide sequence ID" value="NZ_LN832404.1"/>
</dbReference>
<dbReference type="SMR" id="P76228"/>
<dbReference type="BioGRID" id="4259136">
    <property type="interactions" value="11"/>
</dbReference>
<dbReference type="FunCoup" id="P76228">
    <property type="interactions" value="5"/>
</dbReference>
<dbReference type="STRING" id="511145.b1762"/>
<dbReference type="PaxDb" id="511145-b1762"/>
<dbReference type="EnsemblBacteria" id="AAC74832">
    <property type="protein sequence ID" value="AAC74832"/>
    <property type="gene ID" value="b1762"/>
</dbReference>
<dbReference type="GeneID" id="946239"/>
<dbReference type="KEGG" id="ecj:JW5288"/>
<dbReference type="KEGG" id="eco:b1762"/>
<dbReference type="KEGG" id="ecoc:C3026_10055"/>
<dbReference type="PATRIC" id="fig|1411691.4.peg.492"/>
<dbReference type="EchoBASE" id="EB3767"/>
<dbReference type="eggNOG" id="ENOG5032Q3H">
    <property type="taxonomic scope" value="Bacteria"/>
</dbReference>
<dbReference type="HOGENOM" id="CLU_069576_0_0_6"/>
<dbReference type="InParanoid" id="P76228"/>
<dbReference type="OMA" id="SWMTSIS"/>
<dbReference type="OrthoDB" id="787383at2"/>
<dbReference type="BioCyc" id="EcoCyc:G6956-MONOMER"/>
<dbReference type="PRO" id="PR:P76228"/>
<dbReference type="Proteomes" id="UP000000625">
    <property type="component" value="Chromosome"/>
</dbReference>
<dbReference type="GO" id="GO:0005886">
    <property type="term" value="C:plasma membrane"/>
    <property type="evidence" value="ECO:0000314"/>
    <property type="project" value="EcoCyc"/>
</dbReference>
<dbReference type="InterPro" id="IPR009677">
    <property type="entry name" value="DUF1266"/>
</dbReference>
<dbReference type="NCBIfam" id="NF008480">
    <property type="entry name" value="PRK11380.1"/>
    <property type="match status" value="1"/>
</dbReference>
<dbReference type="Pfam" id="PF06889">
    <property type="entry name" value="DUF1266"/>
    <property type="match status" value="1"/>
</dbReference>
<accession>P76228</accession>
<accession>Q2MB32</accession>
<accession>Q47665</accession>
<name>YNJI_ECOLI</name>
<comment type="subcellular location">
    <subcellularLocation>
        <location>Cell inner membrane</location>
        <topology>Multi-pass membrane protein</topology>
    </subcellularLocation>
</comment>
<gene>
    <name type="primary">ynjI</name>
    <name type="ordered locus">b1762</name>
    <name type="ordered locus">JW5288</name>
</gene>